<protein>
    <recommendedName>
        <fullName>Bombesin receptor subtype-3</fullName>
        <shortName>BRS-3</shortName>
    </recommendedName>
</protein>
<proteinExistence type="evidence at protein level"/>
<organism>
    <name type="scientific">Homo sapiens</name>
    <name type="common">Human</name>
    <dbReference type="NCBI Taxonomy" id="9606"/>
    <lineage>
        <taxon>Eukaryota</taxon>
        <taxon>Metazoa</taxon>
        <taxon>Chordata</taxon>
        <taxon>Craniata</taxon>
        <taxon>Vertebrata</taxon>
        <taxon>Euteleostomi</taxon>
        <taxon>Mammalia</taxon>
        <taxon>Eutheria</taxon>
        <taxon>Euarchontoglires</taxon>
        <taxon>Primates</taxon>
        <taxon>Haplorrhini</taxon>
        <taxon>Catarrhini</taxon>
        <taxon>Hominidae</taxon>
        <taxon>Homo</taxon>
    </lineage>
</organism>
<sequence length="399" mass="44411">MAQRQPHSPNQTLISITNDTESSSSVVSNDNTNKGWSGDNSPGIEALCAIYITYAVIISVGILGNAILIKVFFKTKSMQTVPNIFITSLAFGDLLLLLTCVPVDATHYLAEGWLFGRIGCKVLSFIRLTSVGVSVFTLTILSADRYKAVVKPLERQPSNAILKTCVKAGCVWIVSMIFALPEAIFSNVYTFRDPNKNMTFESCTSYPVSKKLLQEIHSLLCFLVFYIIPLSIISVYYSLIARTLYKSTLNIPTEEQSHARKQIESRKRIARTVLVLVALFALCWLPNHLLYLYHSFTSQTYVDPSAMHFIFTIFSRVLAFSNSCVNPFALYWLSKSFQKHFKAQLFCCKAERPEPPVADTSLTTLAVMGTVPGTGSIQMSEISVTSFTGCSVKQAEDRF</sequence>
<gene>
    <name type="primary">BRS3</name>
</gene>
<reference key="1">
    <citation type="journal article" date="1993" name="J. Biol. Chem.">
        <title>BRS-3: a novel bombesin receptor subtype selectively expressed in testis and lung carcinoma cells.</title>
        <authorList>
            <person name="Fathi Z."/>
            <person name="Corjay M.H."/>
            <person name="Shapira H."/>
            <person name="Wada E."/>
            <person name="Benya R."/>
            <person name="Jensen R."/>
            <person name="Viallet J."/>
            <person name="Sausville E.A."/>
            <person name="Battey J.F."/>
        </authorList>
    </citation>
    <scope>NUCLEOTIDE SEQUENCE [MRNA]</scope>
</reference>
<reference key="2">
    <citation type="journal article" date="1994" name="FEBS Lett.">
        <title>Organization and chromosomal localization of the gene for the human bombesin receptor subtype expressed in pregnant uterus.</title>
        <authorList>
            <person name="Gorbulev V."/>
            <person name="Akhundova A."/>
            <person name="Grzeschik K.H."/>
            <person name="Fahrenholz F."/>
        </authorList>
    </citation>
    <scope>NUCLEOTIDE SEQUENCE [GENOMIC DNA]</scope>
    <source>
        <tissue>Uterus</tissue>
    </source>
</reference>
<reference key="3">
    <citation type="submission" date="2004-03" db="EMBL/GenBank/DDBJ databases">
        <title>cDNA clones of human proteins involved in signal transduction sequenced by the Guthrie cDNA resource center (www.cdna.org).</title>
        <authorList>
            <person name="Kopatz S.A."/>
            <person name="Aronstam R.S."/>
            <person name="Sharma S.V."/>
        </authorList>
    </citation>
    <scope>NUCLEOTIDE SEQUENCE [LARGE SCALE MRNA]</scope>
    <source>
        <tissue>Testis</tissue>
    </source>
</reference>
<reference key="4">
    <citation type="journal article" date="2005" name="Nature">
        <title>The DNA sequence of the human X chromosome.</title>
        <authorList>
            <person name="Ross M.T."/>
            <person name="Grafham D.V."/>
            <person name="Coffey A.J."/>
            <person name="Scherer S."/>
            <person name="McLay K."/>
            <person name="Muzny D."/>
            <person name="Platzer M."/>
            <person name="Howell G.R."/>
            <person name="Burrows C."/>
            <person name="Bird C.P."/>
            <person name="Frankish A."/>
            <person name="Lovell F.L."/>
            <person name="Howe K.L."/>
            <person name="Ashurst J.L."/>
            <person name="Fulton R.S."/>
            <person name="Sudbrak R."/>
            <person name="Wen G."/>
            <person name="Jones M.C."/>
            <person name="Hurles M.E."/>
            <person name="Andrews T.D."/>
            <person name="Scott C.E."/>
            <person name="Searle S."/>
            <person name="Ramser J."/>
            <person name="Whittaker A."/>
            <person name="Deadman R."/>
            <person name="Carter N.P."/>
            <person name="Hunt S.E."/>
            <person name="Chen R."/>
            <person name="Cree A."/>
            <person name="Gunaratne P."/>
            <person name="Havlak P."/>
            <person name="Hodgson A."/>
            <person name="Metzker M.L."/>
            <person name="Richards S."/>
            <person name="Scott G."/>
            <person name="Steffen D."/>
            <person name="Sodergren E."/>
            <person name="Wheeler D.A."/>
            <person name="Worley K.C."/>
            <person name="Ainscough R."/>
            <person name="Ambrose K.D."/>
            <person name="Ansari-Lari M.A."/>
            <person name="Aradhya S."/>
            <person name="Ashwell R.I."/>
            <person name="Babbage A.K."/>
            <person name="Bagguley C.L."/>
            <person name="Ballabio A."/>
            <person name="Banerjee R."/>
            <person name="Barker G.E."/>
            <person name="Barlow K.F."/>
            <person name="Barrett I.P."/>
            <person name="Bates K.N."/>
            <person name="Beare D.M."/>
            <person name="Beasley H."/>
            <person name="Beasley O."/>
            <person name="Beck A."/>
            <person name="Bethel G."/>
            <person name="Blechschmidt K."/>
            <person name="Brady N."/>
            <person name="Bray-Allen S."/>
            <person name="Bridgeman A.M."/>
            <person name="Brown A.J."/>
            <person name="Brown M.J."/>
            <person name="Bonnin D."/>
            <person name="Bruford E.A."/>
            <person name="Buhay C."/>
            <person name="Burch P."/>
            <person name="Burford D."/>
            <person name="Burgess J."/>
            <person name="Burrill W."/>
            <person name="Burton J."/>
            <person name="Bye J.M."/>
            <person name="Carder C."/>
            <person name="Carrel L."/>
            <person name="Chako J."/>
            <person name="Chapman J.C."/>
            <person name="Chavez D."/>
            <person name="Chen E."/>
            <person name="Chen G."/>
            <person name="Chen Y."/>
            <person name="Chen Z."/>
            <person name="Chinault C."/>
            <person name="Ciccodicola A."/>
            <person name="Clark S.Y."/>
            <person name="Clarke G."/>
            <person name="Clee C.M."/>
            <person name="Clegg S."/>
            <person name="Clerc-Blankenburg K."/>
            <person name="Clifford K."/>
            <person name="Cobley V."/>
            <person name="Cole C.G."/>
            <person name="Conquer J.S."/>
            <person name="Corby N."/>
            <person name="Connor R.E."/>
            <person name="David R."/>
            <person name="Davies J."/>
            <person name="Davis C."/>
            <person name="Davis J."/>
            <person name="Delgado O."/>
            <person name="Deshazo D."/>
            <person name="Dhami P."/>
            <person name="Ding Y."/>
            <person name="Dinh H."/>
            <person name="Dodsworth S."/>
            <person name="Draper H."/>
            <person name="Dugan-Rocha S."/>
            <person name="Dunham A."/>
            <person name="Dunn M."/>
            <person name="Durbin K.J."/>
            <person name="Dutta I."/>
            <person name="Eades T."/>
            <person name="Ellwood M."/>
            <person name="Emery-Cohen A."/>
            <person name="Errington H."/>
            <person name="Evans K.L."/>
            <person name="Faulkner L."/>
            <person name="Francis F."/>
            <person name="Frankland J."/>
            <person name="Fraser A.E."/>
            <person name="Galgoczy P."/>
            <person name="Gilbert J."/>
            <person name="Gill R."/>
            <person name="Gloeckner G."/>
            <person name="Gregory S.G."/>
            <person name="Gribble S."/>
            <person name="Griffiths C."/>
            <person name="Grocock R."/>
            <person name="Gu Y."/>
            <person name="Gwilliam R."/>
            <person name="Hamilton C."/>
            <person name="Hart E.A."/>
            <person name="Hawes A."/>
            <person name="Heath P.D."/>
            <person name="Heitmann K."/>
            <person name="Hennig S."/>
            <person name="Hernandez J."/>
            <person name="Hinzmann B."/>
            <person name="Ho S."/>
            <person name="Hoffs M."/>
            <person name="Howden P.J."/>
            <person name="Huckle E.J."/>
            <person name="Hume J."/>
            <person name="Hunt P.J."/>
            <person name="Hunt A.R."/>
            <person name="Isherwood J."/>
            <person name="Jacob L."/>
            <person name="Johnson D."/>
            <person name="Jones S."/>
            <person name="de Jong P.J."/>
            <person name="Joseph S.S."/>
            <person name="Keenan S."/>
            <person name="Kelly S."/>
            <person name="Kershaw J.K."/>
            <person name="Khan Z."/>
            <person name="Kioschis P."/>
            <person name="Klages S."/>
            <person name="Knights A.J."/>
            <person name="Kosiura A."/>
            <person name="Kovar-Smith C."/>
            <person name="Laird G.K."/>
            <person name="Langford C."/>
            <person name="Lawlor S."/>
            <person name="Leversha M."/>
            <person name="Lewis L."/>
            <person name="Liu W."/>
            <person name="Lloyd C."/>
            <person name="Lloyd D.M."/>
            <person name="Loulseged H."/>
            <person name="Loveland J.E."/>
            <person name="Lovell J.D."/>
            <person name="Lozado R."/>
            <person name="Lu J."/>
            <person name="Lyne R."/>
            <person name="Ma J."/>
            <person name="Maheshwari M."/>
            <person name="Matthews L.H."/>
            <person name="McDowall J."/>
            <person name="McLaren S."/>
            <person name="McMurray A."/>
            <person name="Meidl P."/>
            <person name="Meitinger T."/>
            <person name="Milne S."/>
            <person name="Miner G."/>
            <person name="Mistry S.L."/>
            <person name="Morgan M."/>
            <person name="Morris S."/>
            <person name="Mueller I."/>
            <person name="Mullikin J.C."/>
            <person name="Nguyen N."/>
            <person name="Nordsiek G."/>
            <person name="Nyakatura G."/>
            <person name="O'dell C.N."/>
            <person name="Okwuonu G."/>
            <person name="Palmer S."/>
            <person name="Pandian R."/>
            <person name="Parker D."/>
            <person name="Parrish J."/>
            <person name="Pasternak S."/>
            <person name="Patel D."/>
            <person name="Pearce A.V."/>
            <person name="Pearson D.M."/>
            <person name="Pelan S.E."/>
            <person name="Perez L."/>
            <person name="Porter K.M."/>
            <person name="Ramsey Y."/>
            <person name="Reichwald K."/>
            <person name="Rhodes S."/>
            <person name="Ridler K.A."/>
            <person name="Schlessinger D."/>
            <person name="Schueler M.G."/>
            <person name="Sehra H.K."/>
            <person name="Shaw-Smith C."/>
            <person name="Shen H."/>
            <person name="Sheridan E.M."/>
            <person name="Shownkeen R."/>
            <person name="Skuce C.D."/>
            <person name="Smith M.L."/>
            <person name="Sotheran E.C."/>
            <person name="Steingruber H.E."/>
            <person name="Steward C.A."/>
            <person name="Storey R."/>
            <person name="Swann R.M."/>
            <person name="Swarbreck D."/>
            <person name="Tabor P.E."/>
            <person name="Taudien S."/>
            <person name="Taylor T."/>
            <person name="Teague B."/>
            <person name="Thomas K."/>
            <person name="Thorpe A."/>
            <person name="Timms K."/>
            <person name="Tracey A."/>
            <person name="Trevanion S."/>
            <person name="Tromans A.C."/>
            <person name="d'Urso M."/>
            <person name="Verduzco D."/>
            <person name="Villasana D."/>
            <person name="Waldron L."/>
            <person name="Wall M."/>
            <person name="Wang Q."/>
            <person name="Warren J."/>
            <person name="Warry G.L."/>
            <person name="Wei X."/>
            <person name="West A."/>
            <person name="Whitehead S.L."/>
            <person name="Whiteley M.N."/>
            <person name="Wilkinson J.E."/>
            <person name="Willey D.L."/>
            <person name="Williams G."/>
            <person name="Williams L."/>
            <person name="Williamson A."/>
            <person name="Williamson H."/>
            <person name="Wilming L."/>
            <person name="Woodmansey R.L."/>
            <person name="Wray P.W."/>
            <person name="Yen J."/>
            <person name="Zhang J."/>
            <person name="Zhou J."/>
            <person name="Zoghbi H."/>
            <person name="Zorilla S."/>
            <person name="Buck D."/>
            <person name="Reinhardt R."/>
            <person name="Poustka A."/>
            <person name="Rosenthal A."/>
            <person name="Lehrach H."/>
            <person name="Meindl A."/>
            <person name="Minx P.J."/>
            <person name="Hillier L.W."/>
            <person name="Willard H.F."/>
            <person name="Wilson R.K."/>
            <person name="Waterston R.H."/>
            <person name="Rice C.M."/>
            <person name="Vaudin M."/>
            <person name="Coulson A."/>
            <person name="Nelson D.L."/>
            <person name="Weinstock G."/>
            <person name="Sulston J.E."/>
            <person name="Durbin R.M."/>
            <person name="Hubbard T."/>
            <person name="Gibbs R.A."/>
            <person name="Beck S."/>
            <person name="Rogers J."/>
            <person name="Bentley D.R."/>
        </authorList>
    </citation>
    <scope>NUCLEOTIDE SEQUENCE [LARGE SCALE GENOMIC DNA]</scope>
</reference>
<reference key="5">
    <citation type="journal article" date="2011" name="PLoS ONE">
        <title>Cloning of a novel protein interacting with BRS-3 and its effects in wound repair of bronchial epithelial cells.</title>
        <authorList>
            <person name="Liu H.J."/>
            <person name="Tan Y.R."/>
            <person name="Li M.L."/>
            <person name="Liu C."/>
            <person name="Xiang Y."/>
            <person name="Qin X.Q."/>
        </authorList>
    </citation>
    <scope>INTERACTION WITH C6ORF89</scope>
</reference>
<comment type="function">
    <text>Role in sperm cell division, maturation, or function. This receptor mediates its action by association with G proteins that activate a phosphatidylinositol-calcium second messenger system.</text>
</comment>
<comment type="subunit">
    <text evidence="4">Interacts with C6orf89.</text>
</comment>
<comment type="subcellular location">
    <subcellularLocation>
        <location>Cell membrane</location>
        <topology>Multi-pass membrane protein</topology>
    </subcellularLocation>
</comment>
<comment type="tissue specificity">
    <text>In germ cells in testis. Lung carcinoma cells.</text>
</comment>
<comment type="similarity">
    <text evidence="3">Belongs to the G-protein coupled receptor 1 family.</text>
</comment>
<name>BRS3_HUMAN</name>
<accession>P32247</accession>
<feature type="chain" id="PRO_0000069196" description="Bombesin receptor subtype-3">
    <location>
        <begin position="1"/>
        <end position="399"/>
    </location>
</feature>
<feature type="topological domain" description="Extracellular" evidence="2">
    <location>
        <begin position="1"/>
        <end position="41"/>
    </location>
</feature>
<feature type="transmembrane region" description="Helical; Name=1" evidence="2">
    <location>
        <begin position="42"/>
        <end position="63"/>
    </location>
</feature>
<feature type="topological domain" description="Cytoplasmic" evidence="2">
    <location>
        <begin position="64"/>
        <end position="82"/>
    </location>
</feature>
<feature type="transmembrane region" description="Helical; Name=2" evidence="2">
    <location>
        <begin position="83"/>
        <end position="103"/>
    </location>
</feature>
<feature type="topological domain" description="Extracellular" evidence="2">
    <location>
        <begin position="104"/>
        <end position="121"/>
    </location>
</feature>
<feature type="transmembrane region" description="Helical; Name=3" evidence="2">
    <location>
        <begin position="122"/>
        <end position="143"/>
    </location>
</feature>
<feature type="topological domain" description="Cytoplasmic" evidence="2">
    <location>
        <begin position="144"/>
        <end position="163"/>
    </location>
</feature>
<feature type="transmembrane region" description="Helical; Name=4" evidence="2">
    <location>
        <begin position="164"/>
        <end position="184"/>
    </location>
</feature>
<feature type="topological domain" description="Extracellular" evidence="2">
    <location>
        <begin position="185"/>
        <end position="220"/>
    </location>
</feature>
<feature type="transmembrane region" description="Helical; Name=5" evidence="2">
    <location>
        <begin position="221"/>
        <end position="241"/>
    </location>
</feature>
<feature type="topological domain" description="Cytoplasmic" evidence="2">
    <location>
        <begin position="242"/>
        <end position="272"/>
    </location>
</feature>
<feature type="transmembrane region" description="Helical; Name=6" evidence="2">
    <location>
        <begin position="273"/>
        <end position="293"/>
    </location>
</feature>
<feature type="topological domain" description="Extracellular" evidence="2">
    <location>
        <begin position="294"/>
        <end position="313"/>
    </location>
</feature>
<feature type="transmembrane region" description="Helical; Name=7" evidence="2">
    <location>
        <begin position="314"/>
        <end position="333"/>
    </location>
</feature>
<feature type="topological domain" description="Cytoplasmic" evidence="2">
    <location>
        <begin position="334"/>
        <end position="399"/>
    </location>
</feature>
<feature type="lipid moiety-binding region" description="S-palmitoyl cysteine" evidence="1">
    <location>
        <position position="347"/>
    </location>
</feature>
<feature type="glycosylation site" description="N-linked (GlcNAc...) asparagine" evidence="2">
    <location>
        <position position="10"/>
    </location>
</feature>
<feature type="glycosylation site" description="N-linked (GlcNAc...) asparagine" evidence="2">
    <location>
        <position position="18"/>
    </location>
</feature>
<feature type="disulfide bond" evidence="3">
    <location>
        <begin position="120"/>
        <end position="203"/>
    </location>
</feature>
<feature type="sequence variant" id="VAR_011844" description="In dbSNP:rs5232.">
    <original>T</original>
    <variation>P</variation>
    <location>
        <position position="53"/>
    </location>
</feature>
<feature type="sequence variant" id="VAR_011845" description="In dbSNP:rs5234.">
    <original>L</original>
    <variation>Q</variation>
    <location>
        <position position="162"/>
    </location>
</feature>
<feature type="helix" evidence="5">
    <location>
        <begin position="51"/>
        <end position="74"/>
    </location>
</feature>
<feature type="helix" evidence="5">
    <location>
        <begin position="76"/>
        <end position="78"/>
    </location>
</feature>
<feature type="helix" evidence="5">
    <location>
        <begin position="83"/>
        <end position="107"/>
    </location>
</feature>
<feature type="helix" evidence="5">
    <location>
        <begin position="116"/>
        <end position="149"/>
    </location>
</feature>
<feature type="helix" evidence="5">
    <location>
        <begin position="152"/>
        <end position="154"/>
    </location>
</feature>
<feature type="helix" evidence="5">
    <location>
        <begin position="161"/>
        <end position="185"/>
    </location>
</feature>
<feature type="strand" evidence="5">
    <location>
        <begin position="187"/>
        <end position="193"/>
    </location>
</feature>
<feature type="turn" evidence="5">
    <location>
        <begin position="194"/>
        <end position="197"/>
    </location>
</feature>
<feature type="strand" evidence="5">
    <location>
        <begin position="198"/>
        <end position="206"/>
    </location>
</feature>
<feature type="helix" evidence="5">
    <location>
        <begin position="208"/>
        <end position="210"/>
    </location>
</feature>
<feature type="helix" evidence="5">
    <location>
        <begin position="211"/>
        <end position="225"/>
    </location>
</feature>
<feature type="helix" evidence="5">
    <location>
        <begin position="227"/>
        <end position="250"/>
    </location>
</feature>
<feature type="helix" evidence="5">
    <location>
        <begin position="260"/>
        <end position="297"/>
    </location>
</feature>
<feature type="helix" evidence="5">
    <location>
        <begin position="308"/>
        <end position="333"/>
    </location>
</feature>
<feature type="helix" evidence="5">
    <location>
        <begin position="336"/>
        <end position="344"/>
    </location>
</feature>
<evidence type="ECO:0000250" key="1"/>
<evidence type="ECO:0000255" key="2"/>
<evidence type="ECO:0000255" key="3">
    <source>
        <dbReference type="PROSITE-ProRule" id="PRU00521"/>
    </source>
</evidence>
<evidence type="ECO:0000269" key="4">
    <source>
    </source>
</evidence>
<evidence type="ECO:0007829" key="5">
    <source>
        <dbReference type="PDB" id="8Y52"/>
    </source>
</evidence>
<dbReference type="EMBL" id="L08893">
    <property type="protein sequence ID" value="AAA35604.1"/>
    <property type="molecule type" value="mRNA"/>
</dbReference>
<dbReference type="EMBL" id="X76498">
    <property type="protein sequence ID" value="CAA54031.1"/>
    <property type="molecule type" value="Genomic_DNA"/>
</dbReference>
<dbReference type="EMBL" id="AY585193">
    <property type="protein sequence ID" value="AAT79496.1"/>
    <property type="molecule type" value="mRNA"/>
</dbReference>
<dbReference type="EMBL" id="Z97632">
    <property type="status" value="NOT_ANNOTATED_CDS"/>
    <property type="molecule type" value="Genomic_DNA"/>
</dbReference>
<dbReference type="CCDS" id="CCDS14656.1"/>
<dbReference type="PIR" id="A46632">
    <property type="entry name" value="A46632"/>
</dbReference>
<dbReference type="RefSeq" id="NP_001718.1">
    <property type="nucleotide sequence ID" value="NM_001727.2"/>
</dbReference>
<dbReference type="PDB" id="8Y51">
    <property type="method" value="EM"/>
    <property type="resolution" value="3.30 A"/>
    <property type="chains" value="R=1-399"/>
</dbReference>
<dbReference type="PDB" id="8Y52">
    <property type="method" value="EM"/>
    <property type="resolution" value="2.90 A"/>
    <property type="chains" value="R=1-361"/>
</dbReference>
<dbReference type="PDB" id="8Y53">
    <property type="method" value="EM"/>
    <property type="resolution" value="2.93 A"/>
    <property type="chains" value="R=1-361"/>
</dbReference>
<dbReference type="PDBsum" id="8Y51"/>
<dbReference type="PDBsum" id="8Y52"/>
<dbReference type="PDBsum" id="8Y53"/>
<dbReference type="EMDB" id="EMD-38927"/>
<dbReference type="EMDB" id="EMD-38928"/>
<dbReference type="EMDB" id="EMD-38929"/>
<dbReference type="SMR" id="P32247"/>
<dbReference type="FunCoup" id="P32247">
    <property type="interactions" value="453"/>
</dbReference>
<dbReference type="STRING" id="9606.ENSP00000359682"/>
<dbReference type="BindingDB" id="P32247"/>
<dbReference type="ChEMBL" id="CHEMBL4080"/>
<dbReference type="DrugBank" id="DB11724">
    <property type="generic name" value="Bombesin"/>
</dbReference>
<dbReference type="GuidetoPHARMACOLOGY" id="40"/>
<dbReference type="GlyCosmos" id="P32247">
    <property type="glycosylation" value="2 sites, No reported glycans"/>
</dbReference>
<dbReference type="GlyGen" id="P32247">
    <property type="glycosylation" value="2 sites"/>
</dbReference>
<dbReference type="iPTMnet" id="P32247"/>
<dbReference type="PhosphoSitePlus" id="P32247"/>
<dbReference type="BioMuta" id="BRS3"/>
<dbReference type="DMDM" id="416726"/>
<dbReference type="MassIVE" id="P32247"/>
<dbReference type="PaxDb" id="9606-ENSP00000359682"/>
<dbReference type="PeptideAtlas" id="P32247"/>
<dbReference type="ProteomicsDB" id="54855"/>
<dbReference type="Antibodypedia" id="580">
    <property type="antibodies" value="466 antibodies from 30 providers"/>
</dbReference>
<dbReference type="DNASU" id="680"/>
<dbReference type="Ensembl" id="ENST00000370648.4">
    <property type="protein sequence ID" value="ENSP00000359682.3"/>
    <property type="gene ID" value="ENSG00000102239.5"/>
</dbReference>
<dbReference type="GeneID" id="680"/>
<dbReference type="KEGG" id="hsa:680"/>
<dbReference type="MANE-Select" id="ENST00000370648.4">
    <property type="protein sequence ID" value="ENSP00000359682.3"/>
    <property type="RefSeq nucleotide sequence ID" value="NM_001727.2"/>
    <property type="RefSeq protein sequence ID" value="NP_001718.1"/>
</dbReference>
<dbReference type="UCSC" id="uc004ezv.2">
    <property type="organism name" value="human"/>
</dbReference>
<dbReference type="AGR" id="HGNC:1113"/>
<dbReference type="CTD" id="680"/>
<dbReference type="DisGeNET" id="680"/>
<dbReference type="GeneCards" id="BRS3"/>
<dbReference type="HGNC" id="HGNC:1113">
    <property type="gene designation" value="BRS3"/>
</dbReference>
<dbReference type="HPA" id="ENSG00000102239">
    <property type="expression patterns" value="Tissue enriched (epididymis)"/>
</dbReference>
<dbReference type="MIM" id="300107">
    <property type="type" value="gene"/>
</dbReference>
<dbReference type="neXtProt" id="NX_P32247"/>
<dbReference type="OpenTargets" id="ENSG00000102239"/>
<dbReference type="PharmGKB" id="PA25427"/>
<dbReference type="VEuPathDB" id="HostDB:ENSG00000102239"/>
<dbReference type="eggNOG" id="KOG3656">
    <property type="taxonomic scope" value="Eukaryota"/>
</dbReference>
<dbReference type="GeneTree" id="ENSGT01120000271837"/>
<dbReference type="HOGENOM" id="CLU_009579_6_2_1"/>
<dbReference type="InParanoid" id="P32247"/>
<dbReference type="OMA" id="GTGNIQM"/>
<dbReference type="OrthoDB" id="10049706at2759"/>
<dbReference type="PAN-GO" id="P32247">
    <property type="GO annotations" value="3 GO annotations based on evolutionary models"/>
</dbReference>
<dbReference type="PhylomeDB" id="P32247"/>
<dbReference type="TreeFam" id="TF331292"/>
<dbReference type="PathwayCommons" id="P32247"/>
<dbReference type="Reactome" id="R-HSA-375276">
    <property type="pathway name" value="Peptide ligand-binding receptors"/>
</dbReference>
<dbReference type="Reactome" id="R-HSA-416476">
    <property type="pathway name" value="G alpha (q) signalling events"/>
</dbReference>
<dbReference type="SignaLink" id="P32247"/>
<dbReference type="BioGRID-ORCS" id="680">
    <property type="hits" value="11 hits in 764 CRISPR screens"/>
</dbReference>
<dbReference type="GeneWiki" id="Bombesin-like_receptor_3"/>
<dbReference type="GenomeRNAi" id="680"/>
<dbReference type="Pharos" id="P32247">
    <property type="development level" value="Tchem"/>
</dbReference>
<dbReference type="PRO" id="PR:P32247"/>
<dbReference type="Proteomes" id="UP000005640">
    <property type="component" value="Chromosome X"/>
</dbReference>
<dbReference type="RNAct" id="P32247">
    <property type="molecule type" value="protein"/>
</dbReference>
<dbReference type="Bgee" id="ENSG00000102239">
    <property type="expression patterns" value="Expressed in buccal mucosa cell and 37 other cell types or tissues"/>
</dbReference>
<dbReference type="GO" id="GO:0016020">
    <property type="term" value="C:membrane"/>
    <property type="evidence" value="ECO:0000304"/>
    <property type="project" value="ProtInc"/>
</dbReference>
<dbReference type="GO" id="GO:0005886">
    <property type="term" value="C:plasma membrane"/>
    <property type="evidence" value="ECO:0000318"/>
    <property type="project" value="GO_Central"/>
</dbReference>
<dbReference type="GO" id="GO:0004946">
    <property type="term" value="F:bombesin receptor activity"/>
    <property type="evidence" value="ECO:0000304"/>
    <property type="project" value="ProtInc"/>
</dbReference>
<dbReference type="GO" id="GO:0008188">
    <property type="term" value="F:neuropeptide receptor activity"/>
    <property type="evidence" value="ECO:0000318"/>
    <property type="project" value="GO_Central"/>
</dbReference>
<dbReference type="GO" id="GO:0008343">
    <property type="term" value="P:adult feeding behavior"/>
    <property type="evidence" value="ECO:0000304"/>
    <property type="project" value="ProtInc"/>
</dbReference>
<dbReference type="GO" id="GO:0007186">
    <property type="term" value="P:G protein-coupled receptor signaling pathway"/>
    <property type="evidence" value="ECO:0000318"/>
    <property type="project" value="GO_Central"/>
</dbReference>
<dbReference type="GO" id="GO:0006006">
    <property type="term" value="P:glucose metabolic process"/>
    <property type="evidence" value="ECO:0000304"/>
    <property type="project" value="ProtInc"/>
</dbReference>
<dbReference type="GO" id="GO:0008217">
    <property type="term" value="P:regulation of blood pressure"/>
    <property type="evidence" value="ECO:0000304"/>
    <property type="project" value="ProtInc"/>
</dbReference>
<dbReference type="CDD" id="cd15123">
    <property type="entry name" value="7tmA_BRS-3"/>
    <property type="match status" value="1"/>
</dbReference>
<dbReference type="FunFam" id="1.20.1070.10:FF:000166">
    <property type="entry name" value="Bombesin receptor subtype-3"/>
    <property type="match status" value="1"/>
</dbReference>
<dbReference type="Gene3D" id="1.20.1070.10">
    <property type="entry name" value="Rhodopsin 7-helix transmembrane proteins"/>
    <property type="match status" value="1"/>
</dbReference>
<dbReference type="InterPro" id="IPR001560">
    <property type="entry name" value="Bombesin_rcpt_3"/>
</dbReference>
<dbReference type="InterPro" id="IPR001556">
    <property type="entry name" value="Bombsn_rcpt-like"/>
</dbReference>
<dbReference type="InterPro" id="IPR000276">
    <property type="entry name" value="GPCR_Rhodpsn"/>
</dbReference>
<dbReference type="InterPro" id="IPR017452">
    <property type="entry name" value="GPCR_Rhodpsn_7TM"/>
</dbReference>
<dbReference type="PANTHER" id="PTHR45695:SF6">
    <property type="entry name" value="BOMBESIN RECEPTOR SUBTYPE-3"/>
    <property type="match status" value="1"/>
</dbReference>
<dbReference type="PANTHER" id="PTHR45695">
    <property type="entry name" value="LEUCOKININ RECEPTOR-RELATED"/>
    <property type="match status" value="1"/>
</dbReference>
<dbReference type="Pfam" id="PF00001">
    <property type="entry name" value="7tm_1"/>
    <property type="match status" value="1"/>
</dbReference>
<dbReference type="PRINTS" id="PR00637">
    <property type="entry name" value="BOMBESIN3R"/>
</dbReference>
<dbReference type="PRINTS" id="PR00358">
    <property type="entry name" value="BOMBESINR"/>
</dbReference>
<dbReference type="PRINTS" id="PR00237">
    <property type="entry name" value="GPCRRHODOPSN"/>
</dbReference>
<dbReference type="SMART" id="SM01381">
    <property type="entry name" value="7TM_GPCR_Srsx"/>
    <property type="match status" value="1"/>
</dbReference>
<dbReference type="SUPFAM" id="SSF81321">
    <property type="entry name" value="Family A G protein-coupled receptor-like"/>
    <property type="match status" value="1"/>
</dbReference>
<dbReference type="PROSITE" id="PS00237">
    <property type="entry name" value="G_PROTEIN_RECEP_F1_1"/>
    <property type="match status" value="1"/>
</dbReference>
<dbReference type="PROSITE" id="PS50262">
    <property type="entry name" value="G_PROTEIN_RECEP_F1_2"/>
    <property type="match status" value="1"/>
</dbReference>
<keyword id="KW-0002">3D-structure</keyword>
<keyword id="KW-1003">Cell membrane</keyword>
<keyword id="KW-1015">Disulfide bond</keyword>
<keyword id="KW-0297">G-protein coupled receptor</keyword>
<keyword id="KW-0325">Glycoprotein</keyword>
<keyword id="KW-0449">Lipoprotein</keyword>
<keyword id="KW-0472">Membrane</keyword>
<keyword id="KW-0564">Palmitate</keyword>
<keyword id="KW-0675">Receptor</keyword>
<keyword id="KW-1185">Reference proteome</keyword>
<keyword id="KW-0807">Transducer</keyword>
<keyword id="KW-0812">Transmembrane</keyword>
<keyword id="KW-1133">Transmembrane helix</keyword>